<dbReference type="EC" id="2.3.1.129" evidence="1"/>
<dbReference type="EMBL" id="AM421808">
    <property type="protein sequence ID" value="CAM09487.1"/>
    <property type="molecule type" value="Genomic_DNA"/>
</dbReference>
<dbReference type="RefSeq" id="WP_002220184.1">
    <property type="nucleotide sequence ID" value="NC_008767.1"/>
</dbReference>
<dbReference type="SMR" id="A1KRK9"/>
<dbReference type="KEGG" id="nmc:NMC0168"/>
<dbReference type="HOGENOM" id="CLU_061249_0_0_4"/>
<dbReference type="UniPathway" id="UPA00359">
    <property type="reaction ID" value="UER00477"/>
</dbReference>
<dbReference type="Proteomes" id="UP000002286">
    <property type="component" value="Chromosome"/>
</dbReference>
<dbReference type="GO" id="GO:0005737">
    <property type="term" value="C:cytoplasm"/>
    <property type="evidence" value="ECO:0007669"/>
    <property type="project" value="UniProtKB-SubCell"/>
</dbReference>
<dbReference type="GO" id="GO:0016020">
    <property type="term" value="C:membrane"/>
    <property type="evidence" value="ECO:0007669"/>
    <property type="project" value="GOC"/>
</dbReference>
<dbReference type="GO" id="GO:0008780">
    <property type="term" value="F:acyl-[acyl-carrier-protein]-UDP-N-acetylglucosamine O-acyltransferase activity"/>
    <property type="evidence" value="ECO:0007669"/>
    <property type="project" value="UniProtKB-UniRule"/>
</dbReference>
<dbReference type="GO" id="GO:0009245">
    <property type="term" value="P:lipid A biosynthetic process"/>
    <property type="evidence" value="ECO:0007669"/>
    <property type="project" value="UniProtKB-UniRule"/>
</dbReference>
<dbReference type="CDD" id="cd03351">
    <property type="entry name" value="LbH_UDP-GlcNAc_AT"/>
    <property type="match status" value="1"/>
</dbReference>
<dbReference type="Gene3D" id="2.160.10.10">
    <property type="entry name" value="Hexapeptide repeat proteins"/>
    <property type="match status" value="1"/>
</dbReference>
<dbReference type="Gene3D" id="1.20.1180.10">
    <property type="entry name" value="Udp N-acetylglucosamine O-acyltransferase, C-terminal domain"/>
    <property type="match status" value="1"/>
</dbReference>
<dbReference type="HAMAP" id="MF_00387">
    <property type="entry name" value="LpxA"/>
    <property type="match status" value="1"/>
</dbReference>
<dbReference type="InterPro" id="IPR029098">
    <property type="entry name" value="Acetyltransf_C"/>
</dbReference>
<dbReference type="InterPro" id="IPR037157">
    <property type="entry name" value="Acetyltransf_C_sf"/>
</dbReference>
<dbReference type="InterPro" id="IPR001451">
    <property type="entry name" value="Hexapep"/>
</dbReference>
<dbReference type="InterPro" id="IPR010137">
    <property type="entry name" value="Lipid_A_LpxA"/>
</dbReference>
<dbReference type="InterPro" id="IPR011004">
    <property type="entry name" value="Trimer_LpxA-like_sf"/>
</dbReference>
<dbReference type="NCBIfam" id="TIGR01852">
    <property type="entry name" value="lipid_A_lpxA"/>
    <property type="match status" value="1"/>
</dbReference>
<dbReference type="NCBIfam" id="NF003657">
    <property type="entry name" value="PRK05289.1"/>
    <property type="match status" value="1"/>
</dbReference>
<dbReference type="PANTHER" id="PTHR43480">
    <property type="entry name" value="ACYL-[ACYL-CARRIER-PROTEIN]--UDP-N-ACETYLGLUCOSAMINE O-ACYLTRANSFERASE"/>
    <property type="match status" value="1"/>
</dbReference>
<dbReference type="PANTHER" id="PTHR43480:SF1">
    <property type="entry name" value="ACYL-[ACYL-CARRIER-PROTEIN]--UDP-N-ACETYLGLUCOSAMINE O-ACYLTRANSFERASE, MITOCHONDRIAL-RELATED"/>
    <property type="match status" value="1"/>
</dbReference>
<dbReference type="Pfam" id="PF13720">
    <property type="entry name" value="Acetyltransf_11"/>
    <property type="match status" value="1"/>
</dbReference>
<dbReference type="Pfam" id="PF00132">
    <property type="entry name" value="Hexapep"/>
    <property type="match status" value="1"/>
</dbReference>
<dbReference type="PIRSF" id="PIRSF000456">
    <property type="entry name" value="UDP-GlcNAc_acltr"/>
    <property type="match status" value="1"/>
</dbReference>
<dbReference type="SUPFAM" id="SSF51161">
    <property type="entry name" value="Trimeric LpxA-like enzymes"/>
    <property type="match status" value="1"/>
</dbReference>
<evidence type="ECO:0000255" key="1">
    <source>
        <dbReference type="HAMAP-Rule" id="MF_00387"/>
    </source>
</evidence>
<protein>
    <recommendedName>
        <fullName evidence="1">Acyl-[acyl-carrier-protein]--UDP-N-acetylglucosamine O-acyltransferase</fullName>
        <shortName evidence="1">UDP-N-acetylglucosamine acyltransferase</shortName>
        <ecNumber evidence="1">2.3.1.129</ecNumber>
    </recommendedName>
</protein>
<feature type="chain" id="PRO_0000302583" description="Acyl-[acyl-carrier-protein]--UDP-N-acetylglucosamine O-acyltransferase">
    <location>
        <begin position="1"/>
        <end position="258"/>
    </location>
</feature>
<sequence>MTLIHPTAVIDPKAELDSSVKVGAYTVIGPNVQIGANTEIGPHAVINGHTSIGENNRIFQFASLGEIPQDKKYRDEPTKLIIGNGNTIREFTTFNLGTVTGIGETRIGDDNWIMAYCHLAHDCVVGNHTIFANNASLAGHVTIGDYVVLGGYTLVFQFCRIGDYAMTAFAAGVHKDVPPYFMASGYRAEPAGLNSEGMRRNGFTAEQISAVKDVYKTLYHRGIPFEEAKADILRHAETQAELAVFRDFFAQSARGIIR</sequence>
<gene>
    <name evidence="1" type="primary">lpxA</name>
    <name type="ordered locus">NMC0168</name>
</gene>
<name>LPXA_NEIMF</name>
<accession>A1KRK9</accession>
<keyword id="KW-0012">Acyltransferase</keyword>
<keyword id="KW-0963">Cytoplasm</keyword>
<keyword id="KW-0441">Lipid A biosynthesis</keyword>
<keyword id="KW-0444">Lipid biosynthesis</keyword>
<keyword id="KW-0443">Lipid metabolism</keyword>
<keyword id="KW-0677">Repeat</keyword>
<keyword id="KW-0808">Transferase</keyword>
<comment type="function">
    <text evidence="1">Involved in the biosynthesis of lipid A, a phosphorylated glycolipid that anchors the lipopolysaccharide to the outer membrane of the cell.</text>
</comment>
<comment type="catalytic activity">
    <reaction evidence="1">
        <text>a (3R)-hydroxyacyl-[ACP] + UDP-N-acetyl-alpha-D-glucosamine = a UDP-3-O-[(3R)-3-hydroxyacyl]-N-acetyl-alpha-D-glucosamine + holo-[ACP]</text>
        <dbReference type="Rhea" id="RHEA:67812"/>
        <dbReference type="Rhea" id="RHEA-COMP:9685"/>
        <dbReference type="Rhea" id="RHEA-COMP:9945"/>
        <dbReference type="ChEBI" id="CHEBI:57705"/>
        <dbReference type="ChEBI" id="CHEBI:64479"/>
        <dbReference type="ChEBI" id="CHEBI:78827"/>
        <dbReference type="ChEBI" id="CHEBI:173225"/>
        <dbReference type="EC" id="2.3.1.129"/>
    </reaction>
</comment>
<comment type="pathway">
    <text evidence="1">Glycolipid biosynthesis; lipid IV(A) biosynthesis; lipid IV(A) from (3R)-3-hydroxytetradecanoyl-[acyl-carrier-protein] and UDP-N-acetyl-alpha-D-glucosamine: step 1/6.</text>
</comment>
<comment type="subunit">
    <text evidence="1">Homotrimer.</text>
</comment>
<comment type="subcellular location">
    <subcellularLocation>
        <location evidence="1">Cytoplasm</location>
    </subcellularLocation>
</comment>
<comment type="similarity">
    <text evidence="1">Belongs to the transferase hexapeptide repeat family. LpxA subfamily.</text>
</comment>
<organism>
    <name type="scientific">Neisseria meningitidis serogroup C / serotype 2a (strain ATCC 700532 / DSM 15464 / FAM18)</name>
    <dbReference type="NCBI Taxonomy" id="272831"/>
    <lineage>
        <taxon>Bacteria</taxon>
        <taxon>Pseudomonadati</taxon>
        <taxon>Pseudomonadota</taxon>
        <taxon>Betaproteobacteria</taxon>
        <taxon>Neisseriales</taxon>
        <taxon>Neisseriaceae</taxon>
        <taxon>Neisseria</taxon>
    </lineage>
</organism>
<reference key="1">
    <citation type="journal article" date="2007" name="PLoS Genet.">
        <title>Meningococcal genetic variation mechanisms viewed through comparative analysis of serogroup C strain FAM18.</title>
        <authorList>
            <person name="Bentley S.D."/>
            <person name="Vernikos G.S."/>
            <person name="Snyder L.A.S."/>
            <person name="Churcher C."/>
            <person name="Arrowsmith C."/>
            <person name="Chillingworth T."/>
            <person name="Cronin A."/>
            <person name="Davis P.H."/>
            <person name="Holroyd N.E."/>
            <person name="Jagels K."/>
            <person name="Maddison M."/>
            <person name="Moule S."/>
            <person name="Rabbinowitsch E."/>
            <person name="Sharp S."/>
            <person name="Unwin L."/>
            <person name="Whitehead S."/>
            <person name="Quail M.A."/>
            <person name="Achtman M."/>
            <person name="Barrell B.G."/>
            <person name="Saunders N.J."/>
            <person name="Parkhill J."/>
        </authorList>
    </citation>
    <scope>NUCLEOTIDE SEQUENCE [LARGE SCALE GENOMIC DNA]</scope>
    <source>
        <strain>ATCC 700532 / DSM 15464 / FAM18</strain>
    </source>
</reference>
<proteinExistence type="inferred from homology"/>